<protein>
    <recommendedName>
        <fullName evidence="1">Adenylate kinase</fullName>
        <shortName evidence="1">AK</shortName>
        <ecNumber evidence="1">2.7.4.3</ecNumber>
    </recommendedName>
    <alternativeName>
        <fullName evidence="1">ATP-AMP transphosphorylase</fullName>
    </alternativeName>
    <alternativeName>
        <fullName evidence="1">ATP:AMP phosphotransferase</fullName>
    </alternativeName>
    <alternativeName>
        <fullName evidence="1">Adenylate monophosphate kinase</fullName>
    </alternativeName>
</protein>
<keyword id="KW-0067">ATP-binding</keyword>
<keyword id="KW-0963">Cytoplasm</keyword>
<keyword id="KW-0418">Kinase</keyword>
<keyword id="KW-0479">Metal-binding</keyword>
<keyword id="KW-0545">Nucleotide biosynthesis</keyword>
<keyword id="KW-0547">Nucleotide-binding</keyword>
<keyword id="KW-1185">Reference proteome</keyword>
<keyword id="KW-0808">Transferase</keyword>
<keyword id="KW-0862">Zinc</keyword>
<organism>
    <name type="scientific">Lachnospira eligens (strain ATCC 27750 / DSM 3376 / VPI C15-48 / C15-B4)</name>
    <name type="common">Eubacterium eligens</name>
    <dbReference type="NCBI Taxonomy" id="515620"/>
    <lineage>
        <taxon>Bacteria</taxon>
        <taxon>Bacillati</taxon>
        <taxon>Bacillota</taxon>
        <taxon>Clostridia</taxon>
        <taxon>Lachnospirales</taxon>
        <taxon>Lachnospiraceae</taxon>
        <taxon>Lachnospira</taxon>
    </lineage>
</organism>
<sequence>MKIIMLGAPGAGKGTQAKKIAAKYAIPHISTGDIFRANIKNNTELGQKAKTYMDKGELVPDELVVDLIMDRFKEADCANGYVLDGFPRTIPQAEALDKALSANGESVDYAINVEVPDENIINRMSGRRACVGCGATYHIQFNPTKVEGICDACGEKLILRDDDKPETVKNRLSVYHEQTQPLIEYYSGKGVLKEVDGTQPMDDVFAAIVKILG</sequence>
<evidence type="ECO:0000255" key="1">
    <source>
        <dbReference type="HAMAP-Rule" id="MF_00235"/>
    </source>
</evidence>
<proteinExistence type="inferred from homology"/>
<gene>
    <name evidence="1" type="primary">adk</name>
    <name type="ordered locus">EUBELI_00320</name>
</gene>
<comment type="function">
    <text evidence="1">Catalyzes the reversible transfer of the terminal phosphate group between ATP and AMP. Plays an important role in cellular energy homeostasis and in adenine nucleotide metabolism.</text>
</comment>
<comment type="catalytic activity">
    <reaction evidence="1">
        <text>AMP + ATP = 2 ADP</text>
        <dbReference type="Rhea" id="RHEA:12973"/>
        <dbReference type="ChEBI" id="CHEBI:30616"/>
        <dbReference type="ChEBI" id="CHEBI:456215"/>
        <dbReference type="ChEBI" id="CHEBI:456216"/>
        <dbReference type="EC" id="2.7.4.3"/>
    </reaction>
</comment>
<comment type="pathway">
    <text evidence="1">Purine metabolism; AMP biosynthesis via salvage pathway; AMP from ADP: step 1/1.</text>
</comment>
<comment type="subunit">
    <text evidence="1">Monomer.</text>
</comment>
<comment type="subcellular location">
    <subcellularLocation>
        <location evidence="1">Cytoplasm</location>
    </subcellularLocation>
</comment>
<comment type="domain">
    <text evidence="1">Consists of three domains, a large central CORE domain and two small peripheral domains, NMPbind and LID, which undergo movements during catalysis. The LID domain closes over the site of phosphoryl transfer upon ATP binding. Assembling and dissambling the active center during each catalytic cycle provides an effective means to prevent ATP hydrolysis. Some bacteria have evolved a zinc-coordinating structure that stabilizes the LID domain.</text>
</comment>
<comment type="similarity">
    <text evidence="1">Belongs to the adenylate kinase family.</text>
</comment>
<dbReference type="EC" id="2.7.4.3" evidence="1"/>
<dbReference type="EMBL" id="CP001104">
    <property type="protein sequence ID" value="ACR71356.1"/>
    <property type="molecule type" value="Genomic_DNA"/>
</dbReference>
<dbReference type="RefSeq" id="WP_012738593.1">
    <property type="nucleotide sequence ID" value="NC_012778.1"/>
</dbReference>
<dbReference type="SMR" id="C4Z2V1"/>
<dbReference type="STRING" id="515620.EUBELI_00320"/>
<dbReference type="GeneID" id="41355093"/>
<dbReference type="KEGG" id="eel:EUBELI_00320"/>
<dbReference type="eggNOG" id="COG0563">
    <property type="taxonomic scope" value="Bacteria"/>
</dbReference>
<dbReference type="HOGENOM" id="CLU_032354_1_2_9"/>
<dbReference type="UniPathway" id="UPA00588">
    <property type="reaction ID" value="UER00649"/>
</dbReference>
<dbReference type="Proteomes" id="UP000001476">
    <property type="component" value="Chromosome"/>
</dbReference>
<dbReference type="GO" id="GO:0005737">
    <property type="term" value="C:cytoplasm"/>
    <property type="evidence" value="ECO:0007669"/>
    <property type="project" value="UniProtKB-SubCell"/>
</dbReference>
<dbReference type="GO" id="GO:0004017">
    <property type="term" value="F:adenylate kinase activity"/>
    <property type="evidence" value="ECO:0007669"/>
    <property type="project" value="UniProtKB-UniRule"/>
</dbReference>
<dbReference type="GO" id="GO:0005524">
    <property type="term" value="F:ATP binding"/>
    <property type="evidence" value="ECO:0007669"/>
    <property type="project" value="UniProtKB-UniRule"/>
</dbReference>
<dbReference type="GO" id="GO:0008270">
    <property type="term" value="F:zinc ion binding"/>
    <property type="evidence" value="ECO:0007669"/>
    <property type="project" value="UniProtKB-UniRule"/>
</dbReference>
<dbReference type="GO" id="GO:0044209">
    <property type="term" value="P:AMP salvage"/>
    <property type="evidence" value="ECO:0007669"/>
    <property type="project" value="UniProtKB-UniRule"/>
</dbReference>
<dbReference type="CDD" id="cd01428">
    <property type="entry name" value="ADK"/>
    <property type="match status" value="1"/>
</dbReference>
<dbReference type="FunFam" id="3.40.50.300:FF:000106">
    <property type="entry name" value="Adenylate kinase mitochondrial"/>
    <property type="match status" value="1"/>
</dbReference>
<dbReference type="Gene3D" id="3.40.50.300">
    <property type="entry name" value="P-loop containing nucleotide triphosphate hydrolases"/>
    <property type="match status" value="1"/>
</dbReference>
<dbReference type="HAMAP" id="MF_00235">
    <property type="entry name" value="Adenylate_kinase_Adk"/>
    <property type="match status" value="1"/>
</dbReference>
<dbReference type="InterPro" id="IPR006259">
    <property type="entry name" value="Adenyl_kin_sub"/>
</dbReference>
<dbReference type="InterPro" id="IPR000850">
    <property type="entry name" value="Adenylat/UMP-CMP_kin"/>
</dbReference>
<dbReference type="InterPro" id="IPR033690">
    <property type="entry name" value="Adenylat_kinase_CS"/>
</dbReference>
<dbReference type="InterPro" id="IPR007862">
    <property type="entry name" value="Adenylate_kinase_lid-dom"/>
</dbReference>
<dbReference type="InterPro" id="IPR027417">
    <property type="entry name" value="P-loop_NTPase"/>
</dbReference>
<dbReference type="NCBIfam" id="TIGR01351">
    <property type="entry name" value="adk"/>
    <property type="match status" value="1"/>
</dbReference>
<dbReference type="NCBIfam" id="NF001379">
    <property type="entry name" value="PRK00279.1-1"/>
    <property type="match status" value="1"/>
</dbReference>
<dbReference type="NCBIfam" id="NF001380">
    <property type="entry name" value="PRK00279.1-2"/>
    <property type="match status" value="1"/>
</dbReference>
<dbReference type="NCBIfam" id="NF001381">
    <property type="entry name" value="PRK00279.1-3"/>
    <property type="match status" value="1"/>
</dbReference>
<dbReference type="NCBIfam" id="NF011100">
    <property type="entry name" value="PRK14527.1"/>
    <property type="match status" value="1"/>
</dbReference>
<dbReference type="PANTHER" id="PTHR23359">
    <property type="entry name" value="NUCLEOTIDE KINASE"/>
    <property type="match status" value="1"/>
</dbReference>
<dbReference type="Pfam" id="PF00406">
    <property type="entry name" value="ADK"/>
    <property type="match status" value="1"/>
</dbReference>
<dbReference type="Pfam" id="PF05191">
    <property type="entry name" value="ADK_lid"/>
    <property type="match status" value="1"/>
</dbReference>
<dbReference type="PRINTS" id="PR00094">
    <property type="entry name" value="ADENYLTKNASE"/>
</dbReference>
<dbReference type="SUPFAM" id="SSF52540">
    <property type="entry name" value="P-loop containing nucleoside triphosphate hydrolases"/>
    <property type="match status" value="1"/>
</dbReference>
<dbReference type="PROSITE" id="PS00113">
    <property type="entry name" value="ADENYLATE_KINASE"/>
    <property type="match status" value="1"/>
</dbReference>
<accession>C4Z2V1</accession>
<name>KAD_LACE2</name>
<feature type="chain" id="PRO_1000204410" description="Adenylate kinase">
    <location>
        <begin position="1"/>
        <end position="213"/>
    </location>
</feature>
<feature type="region of interest" description="NMP" evidence="1">
    <location>
        <begin position="30"/>
        <end position="59"/>
    </location>
</feature>
<feature type="region of interest" description="LID" evidence="1">
    <location>
        <begin position="126"/>
        <end position="163"/>
    </location>
</feature>
<feature type="binding site" evidence="1">
    <location>
        <begin position="10"/>
        <end position="15"/>
    </location>
    <ligand>
        <name>ATP</name>
        <dbReference type="ChEBI" id="CHEBI:30616"/>
    </ligand>
</feature>
<feature type="binding site" evidence="1">
    <location>
        <position position="31"/>
    </location>
    <ligand>
        <name>AMP</name>
        <dbReference type="ChEBI" id="CHEBI:456215"/>
    </ligand>
</feature>
<feature type="binding site" evidence="1">
    <location>
        <position position="36"/>
    </location>
    <ligand>
        <name>AMP</name>
        <dbReference type="ChEBI" id="CHEBI:456215"/>
    </ligand>
</feature>
<feature type="binding site" evidence="1">
    <location>
        <begin position="57"/>
        <end position="59"/>
    </location>
    <ligand>
        <name>AMP</name>
        <dbReference type="ChEBI" id="CHEBI:456215"/>
    </ligand>
</feature>
<feature type="binding site" evidence="1">
    <location>
        <begin position="85"/>
        <end position="88"/>
    </location>
    <ligand>
        <name>AMP</name>
        <dbReference type="ChEBI" id="CHEBI:456215"/>
    </ligand>
</feature>
<feature type="binding site" evidence="1">
    <location>
        <position position="92"/>
    </location>
    <ligand>
        <name>AMP</name>
        <dbReference type="ChEBI" id="CHEBI:456215"/>
    </ligand>
</feature>
<feature type="binding site" evidence="1">
    <location>
        <position position="127"/>
    </location>
    <ligand>
        <name>ATP</name>
        <dbReference type="ChEBI" id="CHEBI:30616"/>
    </ligand>
</feature>
<feature type="binding site" evidence="1">
    <location>
        <position position="130"/>
    </location>
    <ligand>
        <name>Zn(2+)</name>
        <dbReference type="ChEBI" id="CHEBI:29105"/>
        <note>structural</note>
    </ligand>
</feature>
<feature type="binding site" evidence="1">
    <location>
        <position position="133"/>
    </location>
    <ligand>
        <name>Zn(2+)</name>
        <dbReference type="ChEBI" id="CHEBI:29105"/>
        <note>structural</note>
    </ligand>
</feature>
<feature type="binding site" evidence="1">
    <location>
        <begin position="136"/>
        <end position="137"/>
    </location>
    <ligand>
        <name>ATP</name>
        <dbReference type="ChEBI" id="CHEBI:30616"/>
    </ligand>
</feature>
<feature type="binding site" evidence="1">
    <location>
        <position position="150"/>
    </location>
    <ligand>
        <name>Zn(2+)</name>
        <dbReference type="ChEBI" id="CHEBI:29105"/>
        <note>structural</note>
    </ligand>
</feature>
<feature type="binding site" evidence="1">
    <location>
        <position position="153"/>
    </location>
    <ligand>
        <name>Zn(2+)</name>
        <dbReference type="ChEBI" id="CHEBI:29105"/>
        <note>structural</note>
    </ligand>
</feature>
<feature type="binding site" evidence="1">
    <location>
        <position position="160"/>
    </location>
    <ligand>
        <name>AMP</name>
        <dbReference type="ChEBI" id="CHEBI:456215"/>
    </ligand>
</feature>
<feature type="binding site" evidence="1">
    <location>
        <position position="171"/>
    </location>
    <ligand>
        <name>AMP</name>
        <dbReference type="ChEBI" id="CHEBI:456215"/>
    </ligand>
</feature>
<feature type="binding site" evidence="1">
    <location>
        <position position="199"/>
    </location>
    <ligand>
        <name>ATP</name>
        <dbReference type="ChEBI" id="CHEBI:30616"/>
    </ligand>
</feature>
<reference key="1">
    <citation type="journal article" date="2009" name="Proc. Natl. Acad. Sci. U.S.A.">
        <title>Characterizing a model human gut microbiota composed of members of its two dominant bacterial phyla.</title>
        <authorList>
            <person name="Mahowald M.A."/>
            <person name="Rey F.E."/>
            <person name="Seedorf H."/>
            <person name="Turnbaugh P.J."/>
            <person name="Fulton R.S."/>
            <person name="Wollam A."/>
            <person name="Shah N."/>
            <person name="Wang C."/>
            <person name="Magrini V."/>
            <person name="Wilson R.K."/>
            <person name="Cantarel B.L."/>
            <person name="Coutinho P.M."/>
            <person name="Henrissat B."/>
            <person name="Crock L.W."/>
            <person name="Russell A."/>
            <person name="Verberkmoes N.C."/>
            <person name="Hettich R.L."/>
            <person name="Gordon J.I."/>
        </authorList>
    </citation>
    <scope>NUCLEOTIDE SEQUENCE [LARGE SCALE GENOMIC DNA]</scope>
    <source>
        <strain>ATCC 27750 / DSM 3376 / VPI C15-48 / C15-B4</strain>
    </source>
</reference>